<sequence length="380" mass="41298">MAKRDYYEILGVAKSADEREIKKAYKRLAMKFHPDRNQGDKESEGKFKEIKEAYEILTDGQKRAAYDQYGHAAFEQGGMGGGGHGGFGGGGADFSDIFGDVFGDIFGGGRRQQRAARGADLRYNMELTLEEAVRGVSKEIRIPTLEECGVCHGSGAKAGTKPQTCSTCHGAGQVQMRQGFFTVQQACPTCHGRGSVIKDPCNACHGHGRVEKSKTLSVKIPAGVDTGDRIRLSGEGEAGEQGAPAGDLYVQVQVRKHHIFEREENNLYCEVPINFVMAALGGEIEVPTLDGRVNLKVPAETQTGKLFRMRGKGVKSVRGGAQGDLLCRVVVETPVSLNEKQKTLLRELDESFGGPSGEKNSPRSKTFFDGVKKFFDDLTR</sequence>
<organism>
    <name type="scientific">Erwinia tasmaniensis (strain DSM 17950 / CFBP 7177 / CIP 109463 / NCPPB 4357 / Et1/99)</name>
    <dbReference type="NCBI Taxonomy" id="465817"/>
    <lineage>
        <taxon>Bacteria</taxon>
        <taxon>Pseudomonadati</taxon>
        <taxon>Pseudomonadota</taxon>
        <taxon>Gammaproteobacteria</taxon>
        <taxon>Enterobacterales</taxon>
        <taxon>Erwiniaceae</taxon>
        <taxon>Erwinia</taxon>
    </lineage>
</organism>
<feature type="chain" id="PRO_1000137690" description="Chaperone protein DnaJ">
    <location>
        <begin position="1"/>
        <end position="380"/>
    </location>
</feature>
<feature type="domain" description="J" evidence="1">
    <location>
        <begin position="5"/>
        <end position="70"/>
    </location>
</feature>
<feature type="repeat" description="CXXCXGXG motif">
    <location>
        <begin position="148"/>
        <end position="155"/>
    </location>
</feature>
<feature type="repeat" description="CXXCXGXG motif">
    <location>
        <begin position="165"/>
        <end position="172"/>
    </location>
</feature>
<feature type="repeat" description="CXXCXGXG motif">
    <location>
        <begin position="187"/>
        <end position="194"/>
    </location>
</feature>
<feature type="repeat" description="CXXCXGXG motif">
    <location>
        <begin position="201"/>
        <end position="208"/>
    </location>
</feature>
<feature type="zinc finger region" description="CR-type" evidence="1">
    <location>
        <begin position="135"/>
        <end position="213"/>
    </location>
</feature>
<feature type="binding site" evidence="1">
    <location>
        <position position="148"/>
    </location>
    <ligand>
        <name>Zn(2+)</name>
        <dbReference type="ChEBI" id="CHEBI:29105"/>
        <label>1</label>
    </ligand>
</feature>
<feature type="binding site" evidence="1">
    <location>
        <position position="151"/>
    </location>
    <ligand>
        <name>Zn(2+)</name>
        <dbReference type="ChEBI" id="CHEBI:29105"/>
        <label>1</label>
    </ligand>
</feature>
<feature type="binding site" evidence="1">
    <location>
        <position position="165"/>
    </location>
    <ligand>
        <name>Zn(2+)</name>
        <dbReference type="ChEBI" id="CHEBI:29105"/>
        <label>2</label>
    </ligand>
</feature>
<feature type="binding site" evidence="1">
    <location>
        <position position="168"/>
    </location>
    <ligand>
        <name>Zn(2+)</name>
        <dbReference type="ChEBI" id="CHEBI:29105"/>
        <label>2</label>
    </ligand>
</feature>
<feature type="binding site" evidence="1">
    <location>
        <position position="187"/>
    </location>
    <ligand>
        <name>Zn(2+)</name>
        <dbReference type="ChEBI" id="CHEBI:29105"/>
        <label>2</label>
    </ligand>
</feature>
<feature type="binding site" evidence="1">
    <location>
        <position position="190"/>
    </location>
    <ligand>
        <name>Zn(2+)</name>
        <dbReference type="ChEBI" id="CHEBI:29105"/>
        <label>2</label>
    </ligand>
</feature>
<feature type="binding site" evidence="1">
    <location>
        <position position="201"/>
    </location>
    <ligand>
        <name>Zn(2+)</name>
        <dbReference type="ChEBI" id="CHEBI:29105"/>
        <label>1</label>
    </ligand>
</feature>
<feature type="binding site" evidence="1">
    <location>
        <position position="204"/>
    </location>
    <ligand>
        <name>Zn(2+)</name>
        <dbReference type="ChEBI" id="CHEBI:29105"/>
        <label>1</label>
    </ligand>
</feature>
<name>DNAJ_ERWT9</name>
<dbReference type="EMBL" id="CU468135">
    <property type="protein sequence ID" value="CAO95752.1"/>
    <property type="molecule type" value="Genomic_DNA"/>
</dbReference>
<dbReference type="RefSeq" id="WP_012440454.1">
    <property type="nucleotide sequence ID" value="NC_010694.1"/>
</dbReference>
<dbReference type="SMR" id="B2VGS0"/>
<dbReference type="STRING" id="465817.ETA_07060"/>
<dbReference type="KEGG" id="eta:ETA_07060"/>
<dbReference type="eggNOG" id="COG0484">
    <property type="taxonomic scope" value="Bacteria"/>
</dbReference>
<dbReference type="HOGENOM" id="CLU_017633_0_7_6"/>
<dbReference type="OrthoDB" id="9779889at2"/>
<dbReference type="Proteomes" id="UP000001726">
    <property type="component" value="Chromosome"/>
</dbReference>
<dbReference type="GO" id="GO:0005737">
    <property type="term" value="C:cytoplasm"/>
    <property type="evidence" value="ECO:0007669"/>
    <property type="project" value="UniProtKB-SubCell"/>
</dbReference>
<dbReference type="GO" id="GO:0005524">
    <property type="term" value="F:ATP binding"/>
    <property type="evidence" value="ECO:0007669"/>
    <property type="project" value="InterPro"/>
</dbReference>
<dbReference type="GO" id="GO:0031072">
    <property type="term" value="F:heat shock protein binding"/>
    <property type="evidence" value="ECO:0007669"/>
    <property type="project" value="InterPro"/>
</dbReference>
<dbReference type="GO" id="GO:0051082">
    <property type="term" value="F:unfolded protein binding"/>
    <property type="evidence" value="ECO:0007669"/>
    <property type="project" value="UniProtKB-UniRule"/>
</dbReference>
<dbReference type="GO" id="GO:0008270">
    <property type="term" value="F:zinc ion binding"/>
    <property type="evidence" value="ECO:0007669"/>
    <property type="project" value="UniProtKB-UniRule"/>
</dbReference>
<dbReference type="GO" id="GO:0051085">
    <property type="term" value="P:chaperone cofactor-dependent protein refolding"/>
    <property type="evidence" value="ECO:0007669"/>
    <property type="project" value="TreeGrafter"/>
</dbReference>
<dbReference type="GO" id="GO:0006260">
    <property type="term" value="P:DNA replication"/>
    <property type="evidence" value="ECO:0007669"/>
    <property type="project" value="UniProtKB-KW"/>
</dbReference>
<dbReference type="GO" id="GO:0042026">
    <property type="term" value="P:protein refolding"/>
    <property type="evidence" value="ECO:0007669"/>
    <property type="project" value="TreeGrafter"/>
</dbReference>
<dbReference type="GO" id="GO:0009408">
    <property type="term" value="P:response to heat"/>
    <property type="evidence" value="ECO:0007669"/>
    <property type="project" value="InterPro"/>
</dbReference>
<dbReference type="CDD" id="cd06257">
    <property type="entry name" value="DnaJ"/>
    <property type="match status" value="1"/>
</dbReference>
<dbReference type="CDD" id="cd10747">
    <property type="entry name" value="DnaJ_C"/>
    <property type="match status" value="1"/>
</dbReference>
<dbReference type="CDD" id="cd10719">
    <property type="entry name" value="DnaJ_zf"/>
    <property type="match status" value="1"/>
</dbReference>
<dbReference type="FunFam" id="1.10.287.110:FF:000003">
    <property type="entry name" value="Molecular chaperone DnaJ"/>
    <property type="match status" value="1"/>
</dbReference>
<dbReference type="FunFam" id="2.10.230.10:FF:000002">
    <property type="entry name" value="Molecular chaperone DnaJ"/>
    <property type="match status" value="1"/>
</dbReference>
<dbReference type="FunFam" id="2.60.260.20:FF:000004">
    <property type="entry name" value="Molecular chaperone DnaJ"/>
    <property type="match status" value="1"/>
</dbReference>
<dbReference type="Gene3D" id="1.10.287.110">
    <property type="entry name" value="DnaJ domain"/>
    <property type="match status" value="1"/>
</dbReference>
<dbReference type="Gene3D" id="2.10.230.10">
    <property type="entry name" value="Heat shock protein DnaJ, cysteine-rich domain"/>
    <property type="match status" value="1"/>
</dbReference>
<dbReference type="Gene3D" id="2.60.260.20">
    <property type="entry name" value="Urease metallochaperone UreE, N-terminal domain"/>
    <property type="match status" value="2"/>
</dbReference>
<dbReference type="HAMAP" id="MF_01152">
    <property type="entry name" value="DnaJ"/>
    <property type="match status" value="1"/>
</dbReference>
<dbReference type="InterPro" id="IPR012724">
    <property type="entry name" value="DnaJ"/>
</dbReference>
<dbReference type="InterPro" id="IPR002939">
    <property type="entry name" value="DnaJ_C"/>
</dbReference>
<dbReference type="InterPro" id="IPR001623">
    <property type="entry name" value="DnaJ_domain"/>
</dbReference>
<dbReference type="InterPro" id="IPR018253">
    <property type="entry name" value="DnaJ_domain_CS"/>
</dbReference>
<dbReference type="InterPro" id="IPR008971">
    <property type="entry name" value="HSP40/DnaJ_pept-bd"/>
</dbReference>
<dbReference type="InterPro" id="IPR001305">
    <property type="entry name" value="HSP_DnaJ_Cys-rich_dom"/>
</dbReference>
<dbReference type="InterPro" id="IPR036410">
    <property type="entry name" value="HSP_DnaJ_Cys-rich_dom_sf"/>
</dbReference>
<dbReference type="InterPro" id="IPR036869">
    <property type="entry name" value="J_dom_sf"/>
</dbReference>
<dbReference type="NCBIfam" id="TIGR02349">
    <property type="entry name" value="DnaJ_bact"/>
    <property type="match status" value="1"/>
</dbReference>
<dbReference type="NCBIfam" id="NF008035">
    <property type="entry name" value="PRK10767.1"/>
    <property type="match status" value="1"/>
</dbReference>
<dbReference type="PANTHER" id="PTHR43096:SF48">
    <property type="entry name" value="CHAPERONE PROTEIN DNAJ"/>
    <property type="match status" value="1"/>
</dbReference>
<dbReference type="PANTHER" id="PTHR43096">
    <property type="entry name" value="DNAJ HOMOLOG 1, MITOCHONDRIAL-RELATED"/>
    <property type="match status" value="1"/>
</dbReference>
<dbReference type="Pfam" id="PF00226">
    <property type="entry name" value="DnaJ"/>
    <property type="match status" value="1"/>
</dbReference>
<dbReference type="Pfam" id="PF01556">
    <property type="entry name" value="DnaJ_C"/>
    <property type="match status" value="1"/>
</dbReference>
<dbReference type="Pfam" id="PF00684">
    <property type="entry name" value="DnaJ_CXXCXGXG"/>
    <property type="match status" value="1"/>
</dbReference>
<dbReference type="PRINTS" id="PR00625">
    <property type="entry name" value="JDOMAIN"/>
</dbReference>
<dbReference type="SMART" id="SM00271">
    <property type="entry name" value="DnaJ"/>
    <property type="match status" value="1"/>
</dbReference>
<dbReference type="SUPFAM" id="SSF46565">
    <property type="entry name" value="Chaperone J-domain"/>
    <property type="match status" value="1"/>
</dbReference>
<dbReference type="SUPFAM" id="SSF57938">
    <property type="entry name" value="DnaJ/Hsp40 cysteine-rich domain"/>
    <property type="match status" value="1"/>
</dbReference>
<dbReference type="SUPFAM" id="SSF49493">
    <property type="entry name" value="HSP40/DnaJ peptide-binding domain"/>
    <property type="match status" value="2"/>
</dbReference>
<dbReference type="PROSITE" id="PS00636">
    <property type="entry name" value="DNAJ_1"/>
    <property type="match status" value="1"/>
</dbReference>
<dbReference type="PROSITE" id="PS50076">
    <property type="entry name" value="DNAJ_2"/>
    <property type="match status" value="1"/>
</dbReference>
<dbReference type="PROSITE" id="PS51188">
    <property type="entry name" value="ZF_CR"/>
    <property type="match status" value="1"/>
</dbReference>
<accession>B2VGS0</accession>
<gene>
    <name evidence="1" type="primary">dnaJ</name>
    <name type="ordered locus">ETA_07060</name>
</gene>
<protein>
    <recommendedName>
        <fullName evidence="1">Chaperone protein DnaJ</fullName>
    </recommendedName>
</protein>
<evidence type="ECO:0000255" key="1">
    <source>
        <dbReference type="HAMAP-Rule" id="MF_01152"/>
    </source>
</evidence>
<reference key="1">
    <citation type="journal article" date="2008" name="Environ. Microbiol.">
        <title>The genome of Erwinia tasmaniensis strain Et1/99, a non-pathogenic bacterium in the genus Erwinia.</title>
        <authorList>
            <person name="Kube M."/>
            <person name="Migdoll A.M."/>
            <person name="Mueller I."/>
            <person name="Kuhl H."/>
            <person name="Beck A."/>
            <person name="Reinhardt R."/>
            <person name="Geider K."/>
        </authorList>
    </citation>
    <scope>NUCLEOTIDE SEQUENCE [LARGE SCALE GENOMIC DNA]</scope>
    <source>
        <strain>DSM 17950 / CFBP 7177 / CIP 109463 / NCPPB 4357 / Et1/99</strain>
    </source>
</reference>
<proteinExistence type="inferred from homology"/>
<keyword id="KW-0143">Chaperone</keyword>
<keyword id="KW-0963">Cytoplasm</keyword>
<keyword id="KW-0235">DNA replication</keyword>
<keyword id="KW-0479">Metal-binding</keyword>
<keyword id="KW-1185">Reference proteome</keyword>
<keyword id="KW-0677">Repeat</keyword>
<keyword id="KW-0346">Stress response</keyword>
<keyword id="KW-0862">Zinc</keyword>
<keyword id="KW-0863">Zinc-finger</keyword>
<comment type="function">
    <text evidence="1">Participates actively in the response to hyperosmotic and heat shock by preventing the aggregation of stress-denatured proteins and by disaggregating proteins, also in an autonomous, DnaK-independent fashion. Unfolded proteins bind initially to DnaJ; upon interaction with the DnaJ-bound protein, DnaK hydrolyzes its bound ATP, resulting in the formation of a stable complex. GrpE releases ADP from DnaK; ATP binding to DnaK triggers the release of the substrate protein, thus completing the reaction cycle. Several rounds of ATP-dependent interactions between DnaJ, DnaK and GrpE are required for fully efficient folding. Also involved, together with DnaK and GrpE, in the DNA replication of plasmids through activation of initiation proteins.</text>
</comment>
<comment type="cofactor">
    <cofactor evidence="1">
        <name>Zn(2+)</name>
        <dbReference type="ChEBI" id="CHEBI:29105"/>
    </cofactor>
    <text evidence="1">Binds 2 Zn(2+) ions per monomer.</text>
</comment>
<comment type="subunit">
    <text evidence="1">Homodimer.</text>
</comment>
<comment type="subcellular location">
    <subcellularLocation>
        <location evidence="1">Cytoplasm</location>
    </subcellularLocation>
</comment>
<comment type="domain">
    <text evidence="1">The J domain is necessary and sufficient to stimulate DnaK ATPase activity. Zinc center 1 plays an important role in the autonomous, DnaK-independent chaperone activity of DnaJ. Zinc center 2 is essential for interaction with DnaK and for DnaJ activity.</text>
</comment>
<comment type="similarity">
    <text evidence="1">Belongs to the DnaJ family.</text>
</comment>